<evidence type="ECO:0000255" key="1">
    <source>
        <dbReference type="HAMAP-Rule" id="MF_00236"/>
    </source>
</evidence>
<evidence type="ECO:0000256" key="2">
    <source>
        <dbReference type="SAM" id="MobiDB-lite"/>
    </source>
</evidence>
<name>TATA_XYLFT</name>
<keyword id="KW-0997">Cell inner membrane</keyword>
<keyword id="KW-1003">Cell membrane</keyword>
<keyword id="KW-0472">Membrane</keyword>
<keyword id="KW-0653">Protein transport</keyword>
<keyword id="KW-1185">Reference proteome</keyword>
<keyword id="KW-0811">Translocation</keyword>
<keyword id="KW-0812">Transmembrane</keyword>
<keyword id="KW-1133">Transmembrane helix</keyword>
<keyword id="KW-0813">Transport</keyword>
<gene>
    <name evidence="1" type="primary">tatA</name>
    <name type="ordered locus">PD_1578</name>
</gene>
<organism>
    <name type="scientific">Xylella fastidiosa (strain Temecula1 / ATCC 700964)</name>
    <dbReference type="NCBI Taxonomy" id="183190"/>
    <lineage>
        <taxon>Bacteria</taxon>
        <taxon>Pseudomonadati</taxon>
        <taxon>Pseudomonadota</taxon>
        <taxon>Gammaproteobacteria</taxon>
        <taxon>Lysobacterales</taxon>
        <taxon>Lysobacteraceae</taxon>
        <taxon>Xylella</taxon>
    </lineage>
</organism>
<comment type="function">
    <text evidence="1">Part of the twin-arginine translocation (Tat) system that transports large folded proteins containing a characteristic twin-arginine motif in their signal peptide across membranes. TatA could form the protein-conducting channel of the Tat system.</text>
</comment>
<comment type="subunit">
    <text evidence="1">The Tat system comprises two distinct complexes: a TatABC complex, containing multiple copies of TatA, TatB and TatC subunits, and a separate TatA complex, containing only TatA subunits. Substrates initially bind to the TatABC complex, which probably triggers association of the separate TatA complex to form the active translocon.</text>
</comment>
<comment type="subcellular location">
    <subcellularLocation>
        <location evidence="1">Cell inner membrane</location>
        <topology evidence="1">Single-pass membrane protein</topology>
    </subcellularLocation>
</comment>
<comment type="similarity">
    <text evidence="1">Belongs to the TatA/E family.</text>
</comment>
<dbReference type="EMBL" id="AE009442">
    <property type="protein sequence ID" value="AAO29420.1"/>
    <property type="molecule type" value="Genomic_DNA"/>
</dbReference>
<dbReference type="RefSeq" id="WP_004083544.1">
    <property type="nucleotide sequence ID" value="NC_004556.1"/>
</dbReference>
<dbReference type="SMR" id="Q87B80"/>
<dbReference type="GeneID" id="93905405"/>
<dbReference type="KEGG" id="xft:PD_1578"/>
<dbReference type="HOGENOM" id="CLU_086034_5_3_6"/>
<dbReference type="Proteomes" id="UP000002516">
    <property type="component" value="Chromosome"/>
</dbReference>
<dbReference type="GO" id="GO:0033281">
    <property type="term" value="C:TAT protein transport complex"/>
    <property type="evidence" value="ECO:0007669"/>
    <property type="project" value="UniProtKB-UniRule"/>
</dbReference>
<dbReference type="GO" id="GO:0008320">
    <property type="term" value="F:protein transmembrane transporter activity"/>
    <property type="evidence" value="ECO:0007669"/>
    <property type="project" value="UniProtKB-UniRule"/>
</dbReference>
<dbReference type="GO" id="GO:0043953">
    <property type="term" value="P:protein transport by the Tat complex"/>
    <property type="evidence" value="ECO:0007669"/>
    <property type="project" value="UniProtKB-UniRule"/>
</dbReference>
<dbReference type="Gene3D" id="1.20.5.3310">
    <property type="match status" value="1"/>
</dbReference>
<dbReference type="HAMAP" id="MF_00236">
    <property type="entry name" value="TatA_E"/>
    <property type="match status" value="1"/>
</dbReference>
<dbReference type="InterPro" id="IPR003369">
    <property type="entry name" value="TatA/B/E"/>
</dbReference>
<dbReference type="InterPro" id="IPR006312">
    <property type="entry name" value="TatA/E"/>
</dbReference>
<dbReference type="NCBIfam" id="NF003393">
    <property type="entry name" value="PRK04561.1"/>
    <property type="match status" value="1"/>
</dbReference>
<dbReference type="NCBIfam" id="TIGR01411">
    <property type="entry name" value="tatAE"/>
    <property type="match status" value="1"/>
</dbReference>
<dbReference type="PANTHER" id="PTHR42982">
    <property type="entry name" value="SEC-INDEPENDENT PROTEIN TRANSLOCASE PROTEIN TATA"/>
    <property type="match status" value="1"/>
</dbReference>
<dbReference type="PANTHER" id="PTHR42982:SF1">
    <property type="entry name" value="SEC-INDEPENDENT PROTEIN TRANSLOCASE PROTEIN TATA"/>
    <property type="match status" value="1"/>
</dbReference>
<dbReference type="Pfam" id="PF02416">
    <property type="entry name" value="TatA_B_E"/>
    <property type="match status" value="1"/>
</dbReference>
<reference key="1">
    <citation type="journal article" date="2003" name="J. Bacteriol.">
        <title>Comparative analyses of the complete genome sequences of Pierce's disease and citrus variegated chlorosis strains of Xylella fastidiosa.</title>
        <authorList>
            <person name="Van Sluys M.A."/>
            <person name="de Oliveira M.C."/>
            <person name="Monteiro-Vitorello C.B."/>
            <person name="Miyaki C.Y."/>
            <person name="Furlan L.R."/>
            <person name="Camargo L.E.A."/>
            <person name="da Silva A.C.R."/>
            <person name="Moon D.H."/>
            <person name="Takita M.A."/>
            <person name="Lemos E.G.M."/>
            <person name="Machado M.A."/>
            <person name="Ferro M.I.T."/>
            <person name="da Silva F.R."/>
            <person name="Goldman M.H.S."/>
            <person name="Goldman G.H."/>
            <person name="Lemos M.V.F."/>
            <person name="El-Dorry H."/>
            <person name="Tsai S.M."/>
            <person name="Carrer H."/>
            <person name="Carraro D.M."/>
            <person name="de Oliveira R.C."/>
            <person name="Nunes L.R."/>
            <person name="Siqueira W.J."/>
            <person name="Coutinho L.L."/>
            <person name="Kimura E.T."/>
            <person name="Ferro E.S."/>
            <person name="Harakava R."/>
            <person name="Kuramae E.E."/>
            <person name="Marino C.L."/>
            <person name="Giglioti E."/>
            <person name="Abreu I.L."/>
            <person name="Alves L.M.C."/>
            <person name="do Amaral A.M."/>
            <person name="Baia G.S."/>
            <person name="Blanco S.R."/>
            <person name="Brito M.S."/>
            <person name="Cannavan F.S."/>
            <person name="Celestino A.V."/>
            <person name="da Cunha A.F."/>
            <person name="Fenille R.C."/>
            <person name="Ferro J.A."/>
            <person name="Formighieri E.F."/>
            <person name="Kishi L.T."/>
            <person name="Leoni S.G."/>
            <person name="Oliveira A.R."/>
            <person name="Rosa V.E. Jr."/>
            <person name="Sassaki F.T."/>
            <person name="Sena J.A.D."/>
            <person name="de Souza A.A."/>
            <person name="Truffi D."/>
            <person name="Tsukumo F."/>
            <person name="Yanai G.M."/>
            <person name="Zaros L.G."/>
            <person name="Civerolo E.L."/>
            <person name="Simpson A.J.G."/>
            <person name="Almeida N.F. Jr."/>
            <person name="Setubal J.C."/>
            <person name="Kitajima J.P."/>
        </authorList>
    </citation>
    <scope>NUCLEOTIDE SEQUENCE [LARGE SCALE GENOMIC DNA]</scope>
    <source>
        <strain>Temecula1 / ATCC 700964</strain>
    </source>
</reference>
<sequence>MGSFSLLHWLVVLVIVLLVFGTKRLANGAKDIGSAIKEFKKSLHEDDKPTDQLGSTSQSTASGPQQDHGKH</sequence>
<proteinExistence type="inferred from homology"/>
<feature type="chain" id="PRO_0000097969" description="Sec-independent protein translocase protein TatA">
    <location>
        <begin position="1"/>
        <end position="71"/>
    </location>
</feature>
<feature type="transmembrane region" description="Helical" evidence="1">
    <location>
        <begin position="1"/>
        <end position="21"/>
    </location>
</feature>
<feature type="region of interest" description="Disordered" evidence="2">
    <location>
        <begin position="43"/>
        <end position="71"/>
    </location>
</feature>
<feature type="compositionally biased region" description="Polar residues" evidence="2">
    <location>
        <begin position="52"/>
        <end position="65"/>
    </location>
</feature>
<accession>Q87B80</accession>
<protein>
    <recommendedName>
        <fullName evidence="1">Sec-independent protein translocase protein TatA</fullName>
    </recommendedName>
</protein>